<protein>
    <recommendedName>
        <fullName evidence="1">HTH-type transcriptional repressor PurR</fullName>
    </recommendedName>
    <alternativeName>
        <fullName evidence="1">Pur regulon repressor</fullName>
    </alternativeName>
    <alternativeName>
        <fullName evidence="1">Purine nucleotide synthesis repressor</fullName>
    </alternativeName>
</protein>
<accession>B5F6L7</accession>
<sequence>MATIKDVAKRANVSTTTVSHVINKTRFVAEETRNAVWAAIKELHYSPSAVARSLKVNHTKSIGLLATSSEAAYFAEIIEAVEKNCFQKGYTLILGNAWNNLEKQRAYLSMMAQKRVDGLLVMCSEYPEPLLSMLEEYRHIPMVVMDWGEAKADFTDTVIDNAFAGGYMAGRYLVERGHRDIGVIPGPLERNTGAGRLAGFMKAMEEALINVPDNWIVQGDFEPESGYHAMQQILSQSHRPTAVFCGGDIMAMGALCAADEMGLRVPQDVSVIGYDNVRNARFFTPALTTIHQPKDSLGETAFNMLLDRIVNKREESQSIEVHPRLVERRSVADGPFRDYRR</sequence>
<gene>
    <name evidence="1" type="primary">purR</name>
    <name type="ordered locus">SeAg_B1744</name>
</gene>
<reference key="1">
    <citation type="journal article" date="2011" name="J. Bacteriol.">
        <title>Comparative genomics of 28 Salmonella enterica isolates: evidence for CRISPR-mediated adaptive sublineage evolution.</title>
        <authorList>
            <person name="Fricke W.F."/>
            <person name="Mammel M.K."/>
            <person name="McDermott P.F."/>
            <person name="Tartera C."/>
            <person name="White D.G."/>
            <person name="Leclerc J.E."/>
            <person name="Ravel J."/>
            <person name="Cebula T.A."/>
        </authorList>
    </citation>
    <scope>NUCLEOTIDE SEQUENCE [LARGE SCALE GENOMIC DNA]</scope>
    <source>
        <strain>SL483</strain>
    </source>
</reference>
<comment type="function">
    <text evidence="1">Is the main repressor of the genes involved in the de novo synthesis of purine nucleotides, regulating purB, purC, purEK, purF, purHD, purL, purMN and guaBA expression. PurR is allosterically activated to bind its cognate DNA by binding the purine corepressors, hypoxanthine or guanine, thereby effecting transcription repression.</text>
</comment>
<comment type="pathway">
    <text>Purine metabolism; purine nucleotide biosynthesis [regulation].</text>
</comment>
<comment type="subunit">
    <text evidence="1">Homodimer.</text>
</comment>
<comment type="domain">
    <text evidence="1">Consists of two structural and functional domains: an N-terminal DNA-binding domain, approximately the first 60 residues, and a larger C-terminal domain, approximately 280 residues, which imparts the function of corepressor binding and oligomerization.</text>
</comment>
<dbReference type="EMBL" id="CP001138">
    <property type="protein sequence ID" value="ACH50403.1"/>
    <property type="molecule type" value="Genomic_DNA"/>
</dbReference>
<dbReference type="RefSeq" id="WP_000190992.1">
    <property type="nucleotide sequence ID" value="NC_011149.1"/>
</dbReference>
<dbReference type="SMR" id="B5F6L7"/>
<dbReference type="KEGG" id="sea:SeAg_B1744"/>
<dbReference type="HOGENOM" id="CLU_037628_6_2_6"/>
<dbReference type="UniPathway" id="UPA00488"/>
<dbReference type="Proteomes" id="UP000008819">
    <property type="component" value="Chromosome"/>
</dbReference>
<dbReference type="GO" id="GO:0003700">
    <property type="term" value="F:DNA-binding transcription factor activity"/>
    <property type="evidence" value="ECO:0007669"/>
    <property type="project" value="TreeGrafter"/>
</dbReference>
<dbReference type="GO" id="GO:0000976">
    <property type="term" value="F:transcription cis-regulatory region binding"/>
    <property type="evidence" value="ECO:0007669"/>
    <property type="project" value="TreeGrafter"/>
</dbReference>
<dbReference type="GO" id="GO:0045892">
    <property type="term" value="P:negative regulation of DNA-templated transcription"/>
    <property type="evidence" value="ECO:0007669"/>
    <property type="project" value="UniProtKB-UniRule"/>
</dbReference>
<dbReference type="GO" id="GO:0006164">
    <property type="term" value="P:purine nucleotide biosynthetic process"/>
    <property type="evidence" value="ECO:0007669"/>
    <property type="project" value="UniProtKB-UniPathway"/>
</dbReference>
<dbReference type="CDD" id="cd01392">
    <property type="entry name" value="HTH_LacI"/>
    <property type="match status" value="1"/>
</dbReference>
<dbReference type="CDD" id="cd06275">
    <property type="entry name" value="PBP1_PurR"/>
    <property type="match status" value="1"/>
</dbReference>
<dbReference type="FunFam" id="1.10.260.40:FF:000002">
    <property type="entry name" value="HTH-type transcriptional repressor PurR"/>
    <property type="match status" value="1"/>
</dbReference>
<dbReference type="FunFam" id="3.40.50.2300:FF:000045">
    <property type="entry name" value="HTH-type transcriptional repressor PurR"/>
    <property type="match status" value="1"/>
</dbReference>
<dbReference type="Gene3D" id="3.40.50.2300">
    <property type="match status" value="2"/>
</dbReference>
<dbReference type="Gene3D" id="1.10.260.40">
    <property type="entry name" value="lambda repressor-like DNA-binding domains"/>
    <property type="match status" value="1"/>
</dbReference>
<dbReference type="HAMAP" id="MF_01277">
    <property type="entry name" value="HTH_type_PurR"/>
    <property type="match status" value="1"/>
</dbReference>
<dbReference type="InterPro" id="IPR000843">
    <property type="entry name" value="HTH_LacI"/>
</dbReference>
<dbReference type="InterPro" id="IPR046335">
    <property type="entry name" value="LacI/GalR-like_sensor"/>
</dbReference>
<dbReference type="InterPro" id="IPR010982">
    <property type="entry name" value="Lambda_DNA-bd_dom_sf"/>
</dbReference>
<dbReference type="InterPro" id="IPR028082">
    <property type="entry name" value="Peripla_BP_I"/>
</dbReference>
<dbReference type="InterPro" id="IPR023588">
    <property type="entry name" value="Tscrpt_reg_HTH_PurR"/>
</dbReference>
<dbReference type="NCBIfam" id="NF007979">
    <property type="entry name" value="PRK10703.1"/>
    <property type="match status" value="1"/>
</dbReference>
<dbReference type="PANTHER" id="PTHR30146:SF148">
    <property type="entry name" value="HTH-TYPE TRANSCRIPTIONAL REPRESSOR PURR-RELATED"/>
    <property type="match status" value="1"/>
</dbReference>
<dbReference type="PANTHER" id="PTHR30146">
    <property type="entry name" value="LACI-RELATED TRANSCRIPTIONAL REPRESSOR"/>
    <property type="match status" value="1"/>
</dbReference>
<dbReference type="Pfam" id="PF00356">
    <property type="entry name" value="LacI"/>
    <property type="match status" value="1"/>
</dbReference>
<dbReference type="Pfam" id="PF13377">
    <property type="entry name" value="Peripla_BP_3"/>
    <property type="match status" value="1"/>
</dbReference>
<dbReference type="PRINTS" id="PR00036">
    <property type="entry name" value="HTHLACI"/>
</dbReference>
<dbReference type="SMART" id="SM00354">
    <property type="entry name" value="HTH_LACI"/>
    <property type="match status" value="1"/>
</dbReference>
<dbReference type="SUPFAM" id="SSF47413">
    <property type="entry name" value="lambda repressor-like DNA-binding domains"/>
    <property type="match status" value="1"/>
</dbReference>
<dbReference type="SUPFAM" id="SSF53822">
    <property type="entry name" value="Periplasmic binding protein-like I"/>
    <property type="match status" value="1"/>
</dbReference>
<dbReference type="PROSITE" id="PS00356">
    <property type="entry name" value="HTH_LACI_1"/>
    <property type="match status" value="1"/>
</dbReference>
<dbReference type="PROSITE" id="PS50932">
    <property type="entry name" value="HTH_LACI_2"/>
    <property type="match status" value="1"/>
</dbReference>
<feature type="chain" id="PRO_1000140297" description="HTH-type transcriptional repressor PurR">
    <location>
        <begin position="1"/>
        <end position="341"/>
    </location>
</feature>
<feature type="domain" description="HTH lacI-type" evidence="1">
    <location>
        <begin position="2"/>
        <end position="56"/>
    </location>
</feature>
<feature type="DNA-binding region" description="H-T-H motif" evidence="1">
    <location>
        <begin position="4"/>
        <end position="23"/>
    </location>
</feature>
<feature type="DNA-binding region" evidence="1">
    <location>
        <begin position="48"/>
        <end position="56"/>
    </location>
</feature>
<feature type="binding site" evidence="1">
    <location>
        <position position="73"/>
    </location>
    <ligand>
        <name>hypoxanthine</name>
        <dbReference type="ChEBI" id="CHEBI:17368"/>
    </ligand>
</feature>
<feature type="binding site" evidence="1">
    <location>
        <position position="190"/>
    </location>
    <ligand>
        <name>hypoxanthine</name>
        <dbReference type="ChEBI" id="CHEBI:17368"/>
    </ligand>
</feature>
<feature type="binding site" evidence="1">
    <location>
        <position position="192"/>
    </location>
    <ligand>
        <name>hypoxanthine</name>
        <dbReference type="ChEBI" id="CHEBI:17368"/>
    </ligand>
</feature>
<feature type="binding site" evidence="1">
    <location>
        <position position="221"/>
    </location>
    <ligand>
        <name>hypoxanthine</name>
        <dbReference type="ChEBI" id="CHEBI:17368"/>
    </ligand>
</feature>
<feature type="binding site" evidence="1">
    <location>
        <position position="275"/>
    </location>
    <ligand>
        <name>hypoxanthine</name>
        <dbReference type="ChEBI" id="CHEBI:17368"/>
    </ligand>
</feature>
<organism>
    <name type="scientific">Salmonella agona (strain SL483)</name>
    <dbReference type="NCBI Taxonomy" id="454166"/>
    <lineage>
        <taxon>Bacteria</taxon>
        <taxon>Pseudomonadati</taxon>
        <taxon>Pseudomonadota</taxon>
        <taxon>Gammaproteobacteria</taxon>
        <taxon>Enterobacterales</taxon>
        <taxon>Enterobacteriaceae</taxon>
        <taxon>Salmonella</taxon>
    </lineage>
</organism>
<keyword id="KW-0238">DNA-binding</keyword>
<keyword id="KW-0658">Purine biosynthesis</keyword>
<keyword id="KW-0678">Repressor</keyword>
<keyword id="KW-0804">Transcription</keyword>
<keyword id="KW-0805">Transcription regulation</keyword>
<evidence type="ECO:0000255" key="1">
    <source>
        <dbReference type="HAMAP-Rule" id="MF_01277"/>
    </source>
</evidence>
<proteinExistence type="inferred from homology"/>
<name>PURR_SALA4</name>